<name>HISX_BUCAI</name>
<gene>
    <name type="primary">hisD</name>
    <name type="ordered locus">BU100</name>
</gene>
<proteinExistence type="inferred from homology"/>
<accession>P57201</accession>
<comment type="function">
    <text evidence="1">Catalyzes the sequential NAD-dependent oxidations of L-histidinol to L-histidinaldehyde and then to L-histidine.</text>
</comment>
<comment type="catalytic activity">
    <reaction>
        <text>L-histidinol + 2 NAD(+) + H2O = L-histidine + 2 NADH + 3 H(+)</text>
        <dbReference type="Rhea" id="RHEA:20641"/>
        <dbReference type="ChEBI" id="CHEBI:15377"/>
        <dbReference type="ChEBI" id="CHEBI:15378"/>
        <dbReference type="ChEBI" id="CHEBI:57540"/>
        <dbReference type="ChEBI" id="CHEBI:57595"/>
        <dbReference type="ChEBI" id="CHEBI:57699"/>
        <dbReference type="ChEBI" id="CHEBI:57945"/>
        <dbReference type="EC" id="1.1.1.23"/>
    </reaction>
</comment>
<comment type="cofactor">
    <cofactor evidence="1">
        <name>Zn(2+)</name>
        <dbReference type="ChEBI" id="CHEBI:29105"/>
    </cofactor>
    <text evidence="1">Binds 1 zinc ion per subunit.</text>
</comment>
<comment type="pathway">
    <text>Amino-acid biosynthesis; L-histidine biosynthesis; L-histidine from 5-phospho-alpha-D-ribose 1-diphosphate: step 9/9.</text>
</comment>
<comment type="subunit">
    <text evidence="1">Homodimer.</text>
</comment>
<comment type="similarity">
    <text evidence="2">Belongs to the histidinol dehydrogenase family.</text>
</comment>
<evidence type="ECO:0000250" key="1"/>
<evidence type="ECO:0000305" key="2"/>
<sequence>MKYFKNIIFWNKLHPDEQKKILSRPILKENNFIKKTVKEIIENVRLFGNSALKKYTFLFDKQDINTFQVSKEKISSSSFYLSKVLKDSISVAQKNITCFHKAQIPSKIDVETEVGVRCEQIYLPLNSIGIYIPGGTAPLFSTVLMLAIPAKISGCKKIILCSPPPISNEVLYAAHICGIHDIYQVGGAQAIAALALGTETVPKVDKIFGPGNAYVTEAKLQVSSIFNGTEIDMLAGPSELLIIADNTANPDFIAADLLSQAEHGVSSQVILLTPCFELAEKVVLSINKQLNNLSRLSEILKTLKNSSVIIVKNLSECIEISNMYAPEHLIIQTQSPREVLNYISNASSIFLGLWSPESAGDYASGTNHVLPTYGKSITNSSLGLCDFQKRVLVQELTAKGLMKLSNTIEILSSAEKLQAHKNAVKIRVDFLKGKI</sequence>
<reference key="1">
    <citation type="journal article" date="2000" name="Nature">
        <title>Genome sequence of the endocellular bacterial symbiont of aphids Buchnera sp. APS.</title>
        <authorList>
            <person name="Shigenobu S."/>
            <person name="Watanabe H."/>
            <person name="Hattori M."/>
            <person name="Sakaki Y."/>
            <person name="Ishikawa H."/>
        </authorList>
    </citation>
    <scope>NUCLEOTIDE SEQUENCE [LARGE SCALE GENOMIC DNA]</scope>
    <source>
        <strain>APS</strain>
    </source>
</reference>
<organism>
    <name type="scientific">Buchnera aphidicola subsp. Acyrthosiphon pisum (strain APS)</name>
    <name type="common">Acyrthosiphon pisum symbiotic bacterium</name>
    <dbReference type="NCBI Taxonomy" id="107806"/>
    <lineage>
        <taxon>Bacteria</taxon>
        <taxon>Pseudomonadati</taxon>
        <taxon>Pseudomonadota</taxon>
        <taxon>Gammaproteobacteria</taxon>
        <taxon>Enterobacterales</taxon>
        <taxon>Erwiniaceae</taxon>
        <taxon>Buchnera</taxon>
    </lineage>
</organism>
<protein>
    <recommendedName>
        <fullName>Histidinol dehydrogenase</fullName>
        <shortName>HDH</shortName>
        <ecNumber>1.1.1.23</ecNumber>
    </recommendedName>
</protein>
<keyword id="KW-0028">Amino-acid biosynthesis</keyword>
<keyword id="KW-0368">Histidine biosynthesis</keyword>
<keyword id="KW-0479">Metal-binding</keyword>
<keyword id="KW-0520">NAD</keyword>
<keyword id="KW-0560">Oxidoreductase</keyword>
<keyword id="KW-1185">Reference proteome</keyword>
<keyword id="KW-0862">Zinc</keyword>
<dbReference type="EC" id="1.1.1.23"/>
<dbReference type="EMBL" id="BA000003">
    <property type="protein sequence ID" value="BAB12819.1"/>
    <property type="molecule type" value="Genomic_DNA"/>
</dbReference>
<dbReference type="RefSeq" id="NP_239933.1">
    <property type="nucleotide sequence ID" value="NC_002528.1"/>
</dbReference>
<dbReference type="RefSeq" id="WP_009874055.1">
    <property type="nucleotide sequence ID" value="NC_002528.1"/>
</dbReference>
<dbReference type="SMR" id="P57201"/>
<dbReference type="STRING" id="563178.BUAP5A_098"/>
<dbReference type="EnsemblBacteria" id="BAB12819">
    <property type="protein sequence ID" value="BAB12819"/>
    <property type="gene ID" value="BAB12819"/>
</dbReference>
<dbReference type="KEGG" id="buc:BU100"/>
<dbReference type="PATRIC" id="fig|107806.10.peg.108"/>
<dbReference type="eggNOG" id="COG0141">
    <property type="taxonomic scope" value="Bacteria"/>
</dbReference>
<dbReference type="HOGENOM" id="CLU_006732_3_0_6"/>
<dbReference type="UniPathway" id="UPA00031">
    <property type="reaction ID" value="UER00014"/>
</dbReference>
<dbReference type="Proteomes" id="UP000001806">
    <property type="component" value="Chromosome"/>
</dbReference>
<dbReference type="GO" id="GO:0005829">
    <property type="term" value="C:cytosol"/>
    <property type="evidence" value="ECO:0007669"/>
    <property type="project" value="TreeGrafter"/>
</dbReference>
<dbReference type="GO" id="GO:0004399">
    <property type="term" value="F:histidinol dehydrogenase activity"/>
    <property type="evidence" value="ECO:0007669"/>
    <property type="project" value="UniProtKB-UniRule"/>
</dbReference>
<dbReference type="GO" id="GO:0051287">
    <property type="term" value="F:NAD binding"/>
    <property type="evidence" value="ECO:0007669"/>
    <property type="project" value="InterPro"/>
</dbReference>
<dbReference type="GO" id="GO:0008270">
    <property type="term" value="F:zinc ion binding"/>
    <property type="evidence" value="ECO:0007669"/>
    <property type="project" value="UniProtKB-UniRule"/>
</dbReference>
<dbReference type="GO" id="GO:0000105">
    <property type="term" value="P:L-histidine biosynthetic process"/>
    <property type="evidence" value="ECO:0007669"/>
    <property type="project" value="UniProtKB-UniRule"/>
</dbReference>
<dbReference type="CDD" id="cd06572">
    <property type="entry name" value="Histidinol_dh"/>
    <property type="match status" value="1"/>
</dbReference>
<dbReference type="FunFam" id="3.40.50.1980:FF:000001">
    <property type="entry name" value="Histidinol dehydrogenase"/>
    <property type="match status" value="1"/>
</dbReference>
<dbReference type="FunFam" id="3.40.50.1980:FF:000002">
    <property type="entry name" value="Histidinol dehydrogenase, chloroplastic"/>
    <property type="match status" value="1"/>
</dbReference>
<dbReference type="Gene3D" id="1.20.5.1300">
    <property type="match status" value="1"/>
</dbReference>
<dbReference type="Gene3D" id="3.40.50.1980">
    <property type="entry name" value="Nitrogenase molybdenum iron protein domain"/>
    <property type="match status" value="2"/>
</dbReference>
<dbReference type="HAMAP" id="MF_01024">
    <property type="entry name" value="HisD"/>
    <property type="match status" value="1"/>
</dbReference>
<dbReference type="InterPro" id="IPR016161">
    <property type="entry name" value="Ald_DH/histidinol_DH"/>
</dbReference>
<dbReference type="InterPro" id="IPR001692">
    <property type="entry name" value="Histidinol_DH_CS"/>
</dbReference>
<dbReference type="InterPro" id="IPR022695">
    <property type="entry name" value="Histidinol_DH_monofunct"/>
</dbReference>
<dbReference type="InterPro" id="IPR012131">
    <property type="entry name" value="Hstdl_DH"/>
</dbReference>
<dbReference type="NCBIfam" id="TIGR00069">
    <property type="entry name" value="hisD"/>
    <property type="match status" value="1"/>
</dbReference>
<dbReference type="PANTHER" id="PTHR21256:SF2">
    <property type="entry name" value="HISTIDINE BIOSYNTHESIS TRIFUNCTIONAL PROTEIN"/>
    <property type="match status" value="1"/>
</dbReference>
<dbReference type="PANTHER" id="PTHR21256">
    <property type="entry name" value="HISTIDINOL DEHYDROGENASE HDH"/>
    <property type="match status" value="1"/>
</dbReference>
<dbReference type="Pfam" id="PF00815">
    <property type="entry name" value="Histidinol_dh"/>
    <property type="match status" value="1"/>
</dbReference>
<dbReference type="PIRSF" id="PIRSF000099">
    <property type="entry name" value="Histidinol_dh"/>
    <property type="match status" value="1"/>
</dbReference>
<dbReference type="PRINTS" id="PR00083">
    <property type="entry name" value="HOLDHDRGNASE"/>
</dbReference>
<dbReference type="SUPFAM" id="SSF53720">
    <property type="entry name" value="ALDH-like"/>
    <property type="match status" value="1"/>
</dbReference>
<dbReference type="PROSITE" id="PS00611">
    <property type="entry name" value="HISOL_DEHYDROGENASE"/>
    <property type="match status" value="1"/>
</dbReference>
<feature type="chain" id="PRO_0000135742" description="Histidinol dehydrogenase">
    <location>
        <begin position="1"/>
        <end position="435"/>
    </location>
</feature>
<feature type="active site" description="Proton acceptor" evidence="1">
    <location>
        <position position="327"/>
    </location>
</feature>
<feature type="active site" description="Proton acceptor" evidence="1">
    <location>
        <position position="328"/>
    </location>
</feature>
<feature type="binding site" evidence="1">
    <location>
        <position position="131"/>
    </location>
    <ligand>
        <name>NAD(+)</name>
        <dbReference type="ChEBI" id="CHEBI:57540"/>
    </ligand>
</feature>
<feature type="binding site" evidence="1">
    <location>
        <position position="189"/>
    </location>
    <ligand>
        <name>NAD(+)</name>
        <dbReference type="ChEBI" id="CHEBI:57540"/>
    </ligand>
</feature>
<feature type="binding site" evidence="1">
    <location>
        <position position="212"/>
    </location>
    <ligand>
        <name>NAD(+)</name>
        <dbReference type="ChEBI" id="CHEBI:57540"/>
    </ligand>
</feature>
<feature type="binding site" evidence="1">
    <location>
        <position position="238"/>
    </location>
    <ligand>
        <name>substrate</name>
    </ligand>
</feature>
<feature type="binding site" evidence="1">
    <location>
        <position position="260"/>
    </location>
    <ligand>
        <name>substrate</name>
    </ligand>
</feature>
<feature type="binding site" evidence="1">
    <location>
        <position position="260"/>
    </location>
    <ligand>
        <name>Zn(2+)</name>
        <dbReference type="ChEBI" id="CHEBI:29105"/>
    </ligand>
</feature>
<feature type="binding site" evidence="1">
    <location>
        <position position="263"/>
    </location>
    <ligand>
        <name>substrate</name>
    </ligand>
</feature>
<feature type="binding site" evidence="1">
    <location>
        <position position="263"/>
    </location>
    <ligand>
        <name>Zn(2+)</name>
        <dbReference type="ChEBI" id="CHEBI:29105"/>
    </ligand>
</feature>
<feature type="binding site" evidence="1">
    <location>
        <position position="328"/>
    </location>
    <ligand>
        <name>substrate</name>
    </ligand>
</feature>
<feature type="binding site" evidence="1">
    <location>
        <position position="361"/>
    </location>
    <ligand>
        <name>substrate</name>
    </ligand>
</feature>
<feature type="binding site" evidence="1">
    <location>
        <position position="361"/>
    </location>
    <ligand>
        <name>Zn(2+)</name>
        <dbReference type="ChEBI" id="CHEBI:29105"/>
    </ligand>
</feature>
<feature type="binding site" evidence="1">
    <location>
        <position position="415"/>
    </location>
    <ligand>
        <name>substrate</name>
    </ligand>
</feature>
<feature type="binding site" evidence="1">
    <location>
        <position position="420"/>
    </location>
    <ligand>
        <name>substrate</name>
    </ligand>
</feature>
<feature type="binding site" evidence="1">
    <location>
        <position position="420"/>
    </location>
    <ligand>
        <name>Zn(2+)</name>
        <dbReference type="ChEBI" id="CHEBI:29105"/>
    </ligand>
</feature>